<comment type="catalytic activity">
    <reaction evidence="1">
        <text>an acyl phosphate + H2O = a carboxylate + phosphate + H(+)</text>
        <dbReference type="Rhea" id="RHEA:14965"/>
        <dbReference type="ChEBI" id="CHEBI:15377"/>
        <dbReference type="ChEBI" id="CHEBI:15378"/>
        <dbReference type="ChEBI" id="CHEBI:29067"/>
        <dbReference type="ChEBI" id="CHEBI:43474"/>
        <dbReference type="ChEBI" id="CHEBI:59918"/>
        <dbReference type="EC" id="3.6.1.7"/>
    </reaction>
</comment>
<comment type="similarity">
    <text evidence="3">Belongs to the acylphosphatase family.</text>
</comment>
<name>ACYP1_XENLA</name>
<protein>
    <recommendedName>
        <fullName>Acylphosphatase-1</fullName>
        <ecNumber evidence="1">3.6.1.7</ecNumber>
    </recommendedName>
    <alternativeName>
        <fullName>Acylphosphate phosphohydrolase 1</fullName>
    </alternativeName>
</protein>
<reference key="1">
    <citation type="submission" date="2004-07" db="EMBL/GenBank/DDBJ databases">
        <authorList>
            <consortium name="NIH - Xenopus Gene Collection (XGC) project"/>
        </authorList>
    </citation>
    <scope>NUCLEOTIDE SEQUENCE [LARGE SCALE MRNA]</scope>
    <source>
        <tissue>Ovary</tissue>
    </source>
</reference>
<dbReference type="EC" id="3.6.1.7" evidence="1"/>
<dbReference type="EMBL" id="BC077342">
    <property type="protein sequence ID" value="AAH77342.1"/>
    <property type="molecule type" value="mRNA"/>
</dbReference>
<dbReference type="RefSeq" id="NP_001086713.1">
    <property type="nucleotide sequence ID" value="NM_001093244.1"/>
</dbReference>
<dbReference type="RefSeq" id="XP_018087508.1">
    <property type="nucleotide sequence ID" value="XM_018232019.1"/>
</dbReference>
<dbReference type="RefSeq" id="XP_018087509.1">
    <property type="nucleotide sequence ID" value="XM_018232020.1"/>
</dbReference>
<dbReference type="SMR" id="Q6DE05"/>
<dbReference type="DNASU" id="446548"/>
<dbReference type="GeneID" id="446548"/>
<dbReference type="KEGG" id="xla:446548"/>
<dbReference type="AGR" id="Xenbase:XB-GENE-6255934"/>
<dbReference type="CTD" id="446548"/>
<dbReference type="Xenbase" id="XB-GENE-6255934">
    <property type="gene designation" value="acyp1.S"/>
</dbReference>
<dbReference type="OMA" id="WVRNTSH"/>
<dbReference type="OrthoDB" id="7961613at2759"/>
<dbReference type="Proteomes" id="UP000186698">
    <property type="component" value="Chromosome 8S"/>
</dbReference>
<dbReference type="Bgee" id="446548">
    <property type="expression patterns" value="Expressed in testis and 19 other cell types or tissues"/>
</dbReference>
<dbReference type="GO" id="GO:0003998">
    <property type="term" value="F:acylphosphatase activity"/>
    <property type="evidence" value="ECO:0000318"/>
    <property type="project" value="GO_Central"/>
</dbReference>
<dbReference type="FunFam" id="3.30.70.100:FF:000011">
    <property type="entry name" value="Acylphosphatase"/>
    <property type="match status" value="1"/>
</dbReference>
<dbReference type="Gene3D" id="3.30.70.100">
    <property type="match status" value="1"/>
</dbReference>
<dbReference type="InterPro" id="IPR020456">
    <property type="entry name" value="Acylphosphatase"/>
</dbReference>
<dbReference type="InterPro" id="IPR001792">
    <property type="entry name" value="Acylphosphatase-like_dom"/>
</dbReference>
<dbReference type="InterPro" id="IPR036046">
    <property type="entry name" value="Acylphosphatase-like_dom_sf"/>
</dbReference>
<dbReference type="InterPro" id="IPR017968">
    <property type="entry name" value="Acylphosphatase_CS"/>
</dbReference>
<dbReference type="PANTHER" id="PTHR10029">
    <property type="entry name" value="ACYLPHOSPHATASE"/>
    <property type="match status" value="1"/>
</dbReference>
<dbReference type="PANTHER" id="PTHR10029:SF21">
    <property type="entry name" value="ACYLPHOSPHATASE-1"/>
    <property type="match status" value="1"/>
</dbReference>
<dbReference type="Pfam" id="PF00708">
    <property type="entry name" value="Acylphosphatase"/>
    <property type="match status" value="1"/>
</dbReference>
<dbReference type="PRINTS" id="PR00112">
    <property type="entry name" value="ACYLPHPHTASE"/>
</dbReference>
<dbReference type="SUPFAM" id="SSF54975">
    <property type="entry name" value="Acylphosphatase/BLUF domain-like"/>
    <property type="match status" value="1"/>
</dbReference>
<dbReference type="PROSITE" id="PS00150">
    <property type="entry name" value="ACYLPHOSPHATASE_1"/>
    <property type="match status" value="1"/>
</dbReference>
<dbReference type="PROSITE" id="PS00151">
    <property type="entry name" value="ACYLPHOSPHATASE_2"/>
    <property type="match status" value="1"/>
</dbReference>
<dbReference type="PROSITE" id="PS51160">
    <property type="entry name" value="ACYLPHOSPHATASE_3"/>
    <property type="match status" value="1"/>
</dbReference>
<feature type="chain" id="PRO_0000247514" description="Acylphosphatase-1">
    <location>
        <begin position="1"/>
        <end position="99"/>
    </location>
</feature>
<feature type="domain" description="Acylphosphatase-like" evidence="2">
    <location>
        <begin position="9"/>
        <end position="99"/>
    </location>
</feature>
<feature type="active site" evidence="2">
    <location>
        <position position="24"/>
    </location>
</feature>
<feature type="active site" evidence="2">
    <location>
        <position position="42"/>
    </location>
</feature>
<accession>Q6DE05</accession>
<evidence type="ECO:0000250" key="1">
    <source>
        <dbReference type="UniProtKB" id="P07311"/>
    </source>
</evidence>
<evidence type="ECO:0000255" key="2">
    <source>
        <dbReference type="PROSITE-ProRule" id="PRU00520"/>
    </source>
</evidence>
<evidence type="ECO:0000305" key="3"/>
<proteinExistence type="inferred from homology"/>
<organism>
    <name type="scientific">Xenopus laevis</name>
    <name type="common">African clawed frog</name>
    <dbReference type="NCBI Taxonomy" id="8355"/>
    <lineage>
        <taxon>Eukaryota</taxon>
        <taxon>Metazoa</taxon>
        <taxon>Chordata</taxon>
        <taxon>Craniata</taxon>
        <taxon>Vertebrata</taxon>
        <taxon>Euteleostomi</taxon>
        <taxon>Amphibia</taxon>
        <taxon>Batrachia</taxon>
        <taxon>Anura</taxon>
        <taxon>Pipoidea</taxon>
        <taxon>Pipidae</taxon>
        <taxon>Xenopodinae</taxon>
        <taxon>Xenopus</taxon>
        <taxon>Xenopus</taxon>
    </lineage>
</organism>
<keyword id="KW-0378">Hydrolase</keyword>
<keyword id="KW-1185">Reference proteome</keyword>
<gene>
    <name type="primary">acyp1</name>
</gene>
<sequence>MVEEEQPISVDYEVFGKVQGVFFRKYTQAEGNRLGLVGWVRNTDAGTVTGQLQGPSEKVREMQVWLQKKGSPKSRITKVQFQNERRLPKLEHSTFSICK</sequence>